<reference key="1">
    <citation type="journal article" date="2005" name="Proteins">
        <title>A novel strategy for the identification of toxinlike structures in spider venom.</title>
        <authorList>
            <person name="Kozlov S.A."/>
            <person name="Malyavka A."/>
            <person name="McCutchen B."/>
            <person name="Lu A."/>
            <person name="Schepers E."/>
            <person name="Herrmann R."/>
            <person name="Grishin E.V."/>
        </authorList>
    </citation>
    <scope>NUCLEOTIDE SEQUENCE [MRNA]</scope>
    <source>
        <tissue>Venom gland</tissue>
    </source>
</reference>
<organism>
    <name type="scientific">Agelena orientalis</name>
    <name type="common">Funnel-web spider</name>
    <dbReference type="NCBI Taxonomy" id="293813"/>
    <lineage>
        <taxon>Eukaryota</taxon>
        <taxon>Metazoa</taxon>
        <taxon>Ecdysozoa</taxon>
        <taxon>Arthropoda</taxon>
        <taxon>Chelicerata</taxon>
        <taxon>Arachnida</taxon>
        <taxon>Araneae</taxon>
        <taxon>Araneomorphae</taxon>
        <taxon>Entelegynae</taxon>
        <taxon>Agelenidae</taxon>
        <taxon>Agelena</taxon>
    </lineage>
</organism>
<comment type="function">
    <text evidence="1">Insect active toxin causing rapid but reversible paralysis in crickets. No activity shown in mammals. Does not show effect on mammalian voltage-gated calcium channels (By similarity).</text>
</comment>
<comment type="subcellular location">
    <subcellularLocation>
        <location evidence="1">Secreted</location>
    </subcellularLocation>
</comment>
<comment type="tissue specificity">
    <text>Expressed by the venom gland.</text>
</comment>
<comment type="domain">
    <text evidence="1">The presence of a 'disulfide through disulfide knot' structurally defines this protein as a knottin.</text>
</comment>
<comment type="similarity">
    <text evidence="3">Belongs to the neurotoxin 01 (U2-agtx) family.</text>
</comment>
<name>TAG2M_AGEOR</name>
<protein>
    <recommendedName>
        <fullName>U2-agatoxin-Ao1m</fullName>
        <shortName>U2-AGTX-Ao1m</shortName>
    </recommendedName>
    <alternativeName>
        <fullName>Toxin-like structure Agel_12</fullName>
    </alternativeName>
</protein>
<dbReference type="EMBL" id="AY681309">
    <property type="protein sequence ID" value="AAU93667.1"/>
    <property type="molecule type" value="mRNA"/>
</dbReference>
<dbReference type="ArachnoServer" id="AS000101">
    <property type="toxin name" value="U2-agatoxin-Ao1m"/>
</dbReference>
<dbReference type="GO" id="GO:0005576">
    <property type="term" value="C:extracellular region"/>
    <property type="evidence" value="ECO:0007669"/>
    <property type="project" value="UniProtKB-SubCell"/>
</dbReference>
<dbReference type="GO" id="GO:0090729">
    <property type="term" value="F:toxin activity"/>
    <property type="evidence" value="ECO:0007669"/>
    <property type="project" value="UniProtKB-KW"/>
</dbReference>
<dbReference type="Pfam" id="PF05980">
    <property type="entry name" value="Toxin_7"/>
    <property type="match status" value="1"/>
</dbReference>
<dbReference type="SUPFAM" id="SSF57059">
    <property type="entry name" value="omega toxin-like"/>
    <property type="match status" value="1"/>
</dbReference>
<accession>Q5Y4X3</accession>
<keyword id="KW-0027">Amidation</keyword>
<keyword id="KW-1015">Disulfide bond</keyword>
<keyword id="KW-0960">Knottin</keyword>
<keyword id="KW-0528">Neurotoxin</keyword>
<keyword id="KW-0964">Secreted</keyword>
<keyword id="KW-0732">Signal</keyword>
<keyword id="KW-0800">Toxin</keyword>
<proteinExistence type="evidence at transcript level"/>
<sequence>MRAIISLFLISAMVFSMIQAVPEEXGLQLSEDERGGCLPHNRFCNALSGPRCCSGLKCKELSIWDSTCLG</sequence>
<evidence type="ECO:0000250" key="1"/>
<evidence type="ECO:0000255" key="2"/>
<evidence type="ECO:0000305" key="3"/>
<feature type="signal peptide" evidence="2">
    <location>
        <begin position="1"/>
        <end position="20"/>
    </location>
</feature>
<feature type="propeptide" id="PRO_5000093625" evidence="2">
    <location>
        <begin position="21"/>
        <end position="34"/>
    </location>
</feature>
<feature type="chain" id="PRO_5000093626" description="U2-agatoxin-Ao1m">
    <location>
        <begin position="35"/>
        <end position="69"/>
    </location>
</feature>
<feature type="modified residue" description="Leucine amide" evidence="1">
    <location>
        <position position="69"/>
    </location>
</feature>
<feature type="disulfide bond" evidence="1">
    <location>
        <begin position="37"/>
        <end position="53"/>
    </location>
</feature>
<feature type="disulfide bond" evidence="1">
    <location>
        <begin position="44"/>
        <end position="58"/>
    </location>
</feature>
<feature type="disulfide bond" evidence="1">
    <location>
        <begin position="52"/>
        <end position="68"/>
    </location>
</feature>